<organism>
    <name type="scientific">Legionella pneumophila (strain Paris)</name>
    <dbReference type="NCBI Taxonomy" id="297246"/>
    <lineage>
        <taxon>Bacteria</taxon>
        <taxon>Pseudomonadati</taxon>
        <taxon>Pseudomonadota</taxon>
        <taxon>Gammaproteobacteria</taxon>
        <taxon>Legionellales</taxon>
        <taxon>Legionellaceae</taxon>
        <taxon>Legionella</taxon>
    </lineage>
</organism>
<reference key="1">
    <citation type="journal article" date="2004" name="Nat. Genet.">
        <title>Evidence in the Legionella pneumophila genome for exploitation of host cell functions and high genome plasticity.</title>
        <authorList>
            <person name="Cazalet C."/>
            <person name="Rusniok C."/>
            <person name="Brueggemann H."/>
            <person name="Zidane N."/>
            <person name="Magnier A."/>
            <person name="Ma L."/>
            <person name="Tichit M."/>
            <person name="Jarraud S."/>
            <person name="Bouchier C."/>
            <person name="Vandenesch F."/>
            <person name="Kunst F."/>
            <person name="Etienne J."/>
            <person name="Glaser P."/>
            <person name="Buchrieser C."/>
        </authorList>
    </citation>
    <scope>NUCLEOTIDE SEQUENCE [LARGE SCALE GENOMIC DNA]</scope>
    <source>
        <strain>Paris</strain>
    </source>
</reference>
<name>HSLV_LEGPA</name>
<dbReference type="EC" id="3.4.25.2" evidence="1"/>
<dbReference type="EMBL" id="CR628336">
    <property type="protein sequence ID" value="CAH11842.1"/>
    <property type="molecule type" value="Genomic_DNA"/>
</dbReference>
<dbReference type="RefSeq" id="WP_010946377.1">
    <property type="nucleotide sequence ID" value="NC_006368.1"/>
</dbReference>
<dbReference type="SMR" id="Q5X7B1"/>
<dbReference type="MEROPS" id="T01.006"/>
<dbReference type="GeneID" id="57034635"/>
<dbReference type="KEGG" id="lpp:lpp0694"/>
<dbReference type="LegioList" id="lpp0694"/>
<dbReference type="HOGENOM" id="CLU_093872_1_0_6"/>
<dbReference type="GO" id="GO:0009376">
    <property type="term" value="C:HslUV protease complex"/>
    <property type="evidence" value="ECO:0007669"/>
    <property type="project" value="UniProtKB-UniRule"/>
</dbReference>
<dbReference type="GO" id="GO:0005839">
    <property type="term" value="C:proteasome core complex"/>
    <property type="evidence" value="ECO:0007669"/>
    <property type="project" value="InterPro"/>
</dbReference>
<dbReference type="GO" id="GO:0046872">
    <property type="term" value="F:metal ion binding"/>
    <property type="evidence" value="ECO:0007669"/>
    <property type="project" value="UniProtKB-KW"/>
</dbReference>
<dbReference type="GO" id="GO:0004298">
    <property type="term" value="F:threonine-type endopeptidase activity"/>
    <property type="evidence" value="ECO:0007669"/>
    <property type="project" value="UniProtKB-KW"/>
</dbReference>
<dbReference type="GO" id="GO:0051603">
    <property type="term" value="P:proteolysis involved in protein catabolic process"/>
    <property type="evidence" value="ECO:0007669"/>
    <property type="project" value="InterPro"/>
</dbReference>
<dbReference type="CDD" id="cd01913">
    <property type="entry name" value="protease_HslV"/>
    <property type="match status" value="1"/>
</dbReference>
<dbReference type="FunFam" id="3.60.20.10:FF:000002">
    <property type="entry name" value="ATP-dependent protease subunit HslV"/>
    <property type="match status" value="1"/>
</dbReference>
<dbReference type="Gene3D" id="3.60.20.10">
    <property type="entry name" value="Glutamine Phosphoribosylpyrophosphate, subunit 1, domain 1"/>
    <property type="match status" value="1"/>
</dbReference>
<dbReference type="HAMAP" id="MF_00248">
    <property type="entry name" value="HslV"/>
    <property type="match status" value="1"/>
</dbReference>
<dbReference type="InterPro" id="IPR022281">
    <property type="entry name" value="ATP-dep_Prtase_HsIV_su"/>
</dbReference>
<dbReference type="InterPro" id="IPR029055">
    <property type="entry name" value="Ntn_hydrolases_N"/>
</dbReference>
<dbReference type="InterPro" id="IPR001353">
    <property type="entry name" value="Proteasome_sua/b"/>
</dbReference>
<dbReference type="InterPro" id="IPR023333">
    <property type="entry name" value="Proteasome_suB-type"/>
</dbReference>
<dbReference type="NCBIfam" id="TIGR03692">
    <property type="entry name" value="ATP_dep_HslV"/>
    <property type="match status" value="1"/>
</dbReference>
<dbReference type="NCBIfam" id="NF003964">
    <property type="entry name" value="PRK05456.1"/>
    <property type="match status" value="1"/>
</dbReference>
<dbReference type="PANTHER" id="PTHR32194:SF0">
    <property type="entry name" value="ATP-DEPENDENT PROTEASE SUBUNIT HSLV"/>
    <property type="match status" value="1"/>
</dbReference>
<dbReference type="PANTHER" id="PTHR32194">
    <property type="entry name" value="METALLOPROTEASE TLDD"/>
    <property type="match status" value="1"/>
</dbReference>
<dbReference type="Pfam" id="PF00227">
    <property type="entry name" value="Proteasome"/>
    <property type="match status" value="1"/>
</dbReference>
<dbReference type="PIRSF" id="PIRSF039093">
    <property type="entry name" value="HslV"/>
    <property type="match status" value="1"/>
</dbReference>
<dbReference type="SUPFAM" id="SSF56235">
    <property type="entry name" value="N-terminal nucleophile aminohydrolases (Ntn hydrolases)"/>
    <property type="match status" value="1"/>
</dbReference>
<dbReference type="PROSITE" id="PS51476">
    <property type="entry name" value="PROTEASOME_BETA_2"/>
    <property type="match status" value="1"/>
</dbReference>
<keyword id="KW-0021">Allosteric enzyme</keyword>
<keyword id="KW-0963">Cytoplasm</keyword>
<keyword id="KW-0378">Hydrolase</keyword>
<keyword id="KW-0479">Metal-binding</keyword>
<keyword id="KW-0645">Protease</keyword>
<keyword id="KW-0915">Sodium</keyword>
<keyword id="KW-0346">Stress response</keyword>
<keyword id="KW-0888">Threonine protease</keyword>
<accession>Q5X7B1</accession>
<evidence type="ECO:0000255" key="1">
    <source>
        <dbReference type="HAMAP-Rule" id="MF_00248"/>
    </source>
</evidence>
<feature type="chain" id="PRO_1000012627" description="ATP-dependent protease subunit HslV">
    <location>
        <begin position="1"/>
        <end position="182"/>
    </location>
</feature>
<feature type="active site" evidence="1">
    <location>
        <position position="7"/>
    </location>
</feature>
<feature type="binding site" evidence="1">
    <location>
        <position position="162"/>
    </location>
    <ligand>
        <name>Na(+)</name>
        <dbReference type="ChEBI" id="CHEBI:29101"/>
    </ligand>
</feature>
<feature type="binding site" evidence="1">
    <location>
        <position position="165"/>
    </location>
    <ligand>
        <name>Na(+)</name>
        <dbReference type="ChEBI" id="CHEBI:29101"/>
    </ligand>
</feature>
<feature type="binding site" evidence="1">
    <location>
        <position position="168"/>
    </location>
    <ligand>
        <name>Na(+)</name>
        <dbReference type="ChEBI" id="CHEBI:29101"/>
    </ligand>
</feature>
<proteinExistence type="inferred from homology"/>
<comment type="function">
    <text evidence="1">Protease subunit of a proteasome-like degradation complex believed to be a general protein degrading machinery.</text>
</comment>
<comment type="catalytic activity">
    <reaction evidence="1">
        <text>ATP-dependent cleavage of peptide bonds with broad specificity.</text>
        <dbReference type="EC" id="3.4.25.2"/>
    </reaction>
</comment>
<comment type="activity regulation">
    <text evidence="1">Allosterically activated by HslU binding.</text>
</comment>
<comment type="subunit">
    <text evidence="1">A double ring-shaped homohexamer of HslV is capped on each side by a ring-shaped HslU homohexamer. The assembly of the HslU/HslV complex is dependent on binding of ATP.</text>
</comment>
<comment type="subcellular location">
    <subcellularLocation>
        <location evidence="1">Cytoplasm</location>
    </subcellularLocation>
</comment>
<comment type="similarity">
    <text evidence="1">Belongs to the peptidase T1B family. HslV subfamily.</text>
</comment>
<sequence>MEQFHGTTILSVRRGNQVVIGGDGQVTLGNTVMKGNARKVRRLYKDKVIAGFAGGTADAFTLFERFEAKLEMHQGHLIRAAVELAKDWRTDRILRRLEAVLAVADSKASLIITGNGDVIEPEESLIAIGSGGPFAQAAARALMENTQLSAKEIVQKALTIAGDICIYTNNNLTIEELNDEGK</sequence>
<gene>
    <name evidence="1" type="primary">hslV</name>
    <name type="ordered locus">lpp0694</name>
</gene>
<protein>
    <recommendedName>
        <fullName evidence="1">ATP-dependent protease subunit HslV</fullName>
        <ecNumber evidence="1">3.4.25.2</ecNumber>
    </recommendedName>
</protein>